<evidence type="ECO:0000250" key="1"/>
<evidence type="ECO:0000255" key="2"/>
<evidence type="ECO:0000255" key="3">
    <source>
        <dbReference type="PROSITE-ProRule" id="PRU00143"/>
    </source>
</evidence>
<evidence type="ECO:0000305" key="4"/>
<accession>O85291</accession>
<dbReference type="EC" id="3.4.21.107"/>
<dbReference type="EMBL" id="AF060492">
    <property type="protein sequence ID" value="AAC32331.1"/>
    <property type="molecule type" value="Genomic_DNA"/>
</dbReference>
<dbReference type="EMBL" id="AE013218">
    <property type="protein sequence ID" value="AAM67781.1"/>
    <property type="molecule type" value="Genomic_DNA"/>
</dbReference>
<dbReference type="RefSeq" id="WP_011053748.1">
    <property type="nucleotide sequence ID" value="NC_004061.1"/>
</dbReference>
<dbReference type="SMR" id="O85291"/>
<dbReference type="STRING" id="198804.BUsg_222"/>
<dbReference type="GeneID" id="93003688"/>
<dbReference type="KEGG" id="bas:BUsg_222"/>
<dbReference type="eggNOG" id="COG0265">
    <property type="taxonomic scope" value="Bacteria"/>
</dbReference>
<dbReference type="HOGENOM" id="CLU_020120_1_1_6"/>
<dbReference type="Proteomes" id="UP000000416">
    <property type="component" value="Chromosome"/>
</dbReference>
<dbReference type="GO" id="GO:0030288">
    <property type="term" value="C:outer membrane-bounded periplasmic space"/>
    <property type="evidence" value="ECO:0000250"/>
    <property type="project" value="UniProtKB"/>
</dbReference>
<dbReference type="GO" id="GO:0004252">
    <property type="term" value="F:serine-type endopeptidase activity"/>
    <property type="evidence" value="ECO:0000250"/>
    <property type="project" value="UniProtKB"/>
</dbReference>
<dbReference type="GO" id="GO:0006508">
    <property type="term" value="P:proteolysis"/>
    <property type="evidence" value="ECO:0007669"/>
    <property type="project" value="UniProtKB-KW"/>
</dbReference>
<dbReference type="CDD" id="cd10839">
    <property type="entry name" value="cpPDZ1_DegP-like"/>
    <property type="match status" value="1"/>
</dbReference>
<dbReference type="CDD" id="cd23084">
    <property type="entry name" value="cpPDZ2_DegP-like"/>
    <property type="match status" value="1"/>
</dbReference>
<dbReference type="FunFam" id="2.30.42.10:FF:000037">
    <property type="entry name" value="Periplasmic serine endoprotease DegP-like"/>
    <property type="match status" value="1"/>
</dbReference>
<dbReference type="FunFam" id="2.30.42.10:FF:000050">
    <property type="entry name" value="Periplasmic serine endoprotease DegP-like"/>
    <property type="match status" value="1"/>
</dbReference>
<dbReference type="FunFam" id="2.40.10.120:FF:000001">
    <property type="entry name" value="Periplasmic serine endoprotease DegP-like"/>
    <property type="match status" value="1"/>
</dbReference>
<dbReference type="FunFam" id="2.40.10.10:FF:000001">
    <property type="entry name" value="Periplasmic serine protease DegS"/>
    <property type="match status" value="1"/>
</dbReference>
<dbReference type="Gene3D" id="2.30.42.10">
    <property type="match status" value="2"/>
</dbReference>
<dbReference type="Gene3D" id="2.40.10.120">
    <property type="match status" value="1"/>
</dbReference>
<dbReference type="InterPro" id="IPR001478">
    <property type="entry name" value="PDZ"/>
</dbReference>
<dbReference type="InterPro" id="IPR036034">
    <property type="entry name" value="PDZ_sf"/>
</dbReference>
<dbReference type="InterPro" id="IPR011782">
    <property type="entry name" value="Pept_S1C_Do"/>
</dbReference>
<dbReference type="InterPro" id="IPR009003">
    <property type="entry name" value="Peptidase_S1_PA"/>
</dbReference>
<dbReference type="InterPro" id="IPR001940">
    <property type="entry name" value="Peptidase_S1C"/>
</dbReference>
<dbReference type="NCBIfam" id="TIGR02037">
    <property type="entry name" value="degP_htrA_DO"/>
    <property type="match status" value="1"/>
</dbReference>
<dbReference type="NCBIfam" id="NF008189">
    <property type="entry name" value="PRK10942.1"/>
    <property type="match status" value="1"/>
</dbReference>
<dbReference type="PANTHER" id="PTHR22939">
    <property type="entry name" value="SERINE PROTEASE FAMILY S1C HTRA-RELATED"/>
    <property type="match status" value="1"/>
</dbReference>
<dbReference type="PANTHER" id="PTHR22939:SF129">
    <property type="entry name" value="SERINE PROTEASE HTRA2, MITOCHONDRIAL"/>
    <property type="match status" value="1"/>
</dbReference>
<dbReference type="Pfam" id="PF00595">
    <property type="entry name" value="PDZ"/>
    <property type="match status" value="2"/>
</dbReference>
<dbReference type="Pfam" id="PF13365">
    <property type="entry name" value="Trypsin_2"/>
    <property type="match status" value="1"/>
</dbReference>
<dbReference type="PRINTS" id="PR00834">
    <property type="entry name" value="PROTEASES2C"/>
</dbReference>
<dbReference type="SMART" id="SM00228">
    <property type="entry name" value="PDZ"/>
    <property type="match status" value="2"/>
</dbReference>
<dbReference type="SUPFAM" id="SSF50156">
    <property type="entry name" value="PDZ domain-like"/>
    <property type="match status" value="2"/>
</dbReference>
<dbReference type="SUPFAM" id="SSF50494">
    <property type="entry name" value="Trypsin-like serine proteases"/>
    <property type="match status" value="1"/>
</dbReference>
<dbReference type="PROSITE" id="PS50106">
    <property type="entry name" value="PDZ"/>
    <property type="match status" value="1"/>
</dbReference>
<sequence length="478" mass="51303">MKRINIVLSGIMLFLTLLLSFGMSWGNKNFTSSQNVSSVQLAPSLAPMLEKVMPSVISINIEGSTVVHTSRLPHQFQPFFGHNSPFCQGNSPFRNSPFCRSNPNSNSMHEKFHALGSGVIINADKAYAVTNNHVVENANKIQVQLSDGRRYEASIIGKDSRSDIALIQLKNAKNLSAIKIADSDTLRVGDYTVAIGNPYGLGETVTSGIISALGRSGLNIEHYENFIQTDAAINRGNSGGALVNLKGELIGINTAILAPDGGNIGIGFAIPGNMVKNLTEQMVKFGQVKRGELGIIGMELNSDLAHVMKINAQKGAFVSQVLPNSSAFHAGIKAGDIIVSLNKKTISSFAALRAEVGSLPVSTKMELGIFRNGITKNVIVELKPSLKNSVSLGDIYTGIEGADLSDCSLNGQKGVKIENIKLNTQASKIGFKKDDIIVEVNQKVINNLNDLKNILDSKPNILVFSVKRGNNSIYLVSE</sequence>
<comment type="function">
    <text evidence="1">Might be efficient in the degradation of transiently denatured and unfolded proteins which accumulate in the periplasm following stress conditions.</text>
</comment>
<comment type="catalytic activity">
    <reaction>
        <text>Acts on substrates that are at least partially unfolded. The cleavage site P1 residue is normally between a pair of hydrophobic residues, such as Val-|-Val.</text>
        <dbReference type="EC" id="3.4.21.107"/>
    </reaction>
</comment>
<comment type="subcellular location">
    <subcellularLocation>
        <location evidence="4">Periplasm</location>
    </subcellularLocation>
</comment>
<comment type="similarity">
    <text evidence="4">Belongs to the peptidase S1C family.</text>
</comment>
<organism>
    <name type="scientific">Buchnera aphidicola subsp. Schizaphis graminum (strain Sg)</name>
    <dbReference type="NCBI Taxonomy" id="198804"/>
    <lineage>
        <taxon>Bacteria</taxon>
        <taxon>Pseudomonadati</taxon>
        <taxon>Pseudomonadota</taxon>
        <taxon>Gammaproteobacteria</taxon>
        <taxon>Enterobacterales</taxon>
        <taxon>Erwiniaceae</taxon>
        <taxon>Buchnera</taxon>
    </lineage>
</organism>
<proteinExistence type="inferred from homology"/>
<protein>
    <recommendedName>
        <fullName>Probable periplasmic serine endoprotease DegP-like</fullName>
        <ecNumber>3.4.21.107</ecNumber>
    </recommendedName>
    <alternativeName>
        <fullName>Protease Do</fullName>
    </alternativeName>
</protein>
<gene>
    <name type="primary">htrA</name>
    <name type="ordered locus">BUsg_222</name>
</gene>
<feature type="signal peptide" evidence="2">
    <location>
        <begin position="1"/>
        <end position="26"/>
    </location>
</feature>
<feature type="chain" id="PRO_0000026928" description="Probable periplasmic serine endoprotease DegP-like">
    <location>
        <begin position="27"/>
        <end position="478"/>
    </location>
</feature>
<feature type="domain" description="PDZ 1" evidence="3">
    <location>
        <begin position="281"/>
        <end position="372"/>
    </location>
</feature>
<feature type="domain" description="PDZ 2" evidence="3">
    <location>
        <begin position="387"/>
        <end position="469"/>
    </location>
</feature>
<feature type="region of interest" description="Serine protease">
    <location>
        <begin position="116"/>
        <end position="254"/>
    </location>
</feature>
<feature type="active site" description="Charge relay system" evidence="2">
    <location>
        <position position="133"/>
    </location>
</feature>
<feature type="active site" description="Charge relay system" evidence="2">
    <location>
        <position position="163"/>
    </location>
</feature>
<feature type="active site" description="Charge relay system" evidence="2">
    <location>
        <position position="238"/>
    </location>
</feature>
<feature type="binding site" evidence="1">
    <location>
        <begin position="236"/>
        <end position="238"/>
    </location>
    <ligand>
        <name>substrate</name>
    </ligand>
</feature>
<feature type="binding site" evidence="1">
    <location>
        <begin position="293"/>
        <end position="297"/>
    </location>
    <ligand>
        <name>substrate</name>
    </ligand>
</feature>
<feature type="disulfide bond" evidence="1">
    <location>
        <begin position="87"/>
        <end position="99"/>
    </location>
</feature>
<reference key="1">
    <citation type="journal article" date="1998" name="Curr. Microbiol.">
        <title>Sequence analysis of a DNA fragment from Buchnera aphidicola (Aphid endosymbiont) containing the genes dapD-htrA-ilvI-ilvH-ftsL-ftsI-murE.</title>
        <authorList>
            <person name="Thao M.L."/>
            <person name="Baumann P."/>
        </authorList>
    </citation>
    <scope>NUCLEOTIDE SEQUENCE [GENOMIC DNA]</scope>
</reference>
<reference key="2">
    <citation type="journal article" date="2002" name="Science">
        <title>50 million years of genomic stasis in endosymbiotic bacteria.</title>
        <authorList>
            <person name="Tamas I."/>
            <person name="Klasson L."/>
            <person name="Canbaeck B."/>
            <person name="Naeslund A.K."/>
            <person name="Eriksson A.-S."/>
            <person name="Wernegreen J.J."/>
            <person name="Sandstroem J.P."/>
            <person name="Moran N.A."/>
            <person name="Andersson S.G.E."/>
        </authorList>
    </citation>
    <scope>NUCLEOTIDE SEQUENCE [LARGE SCALE GENOMIC DNA]</scope>
    <source>
        <strain>Sg</strain>
    </source>
</reference>
<name>DEGPL_BUCAP</name>
<keyword id="KW-1015">Disulfide bond</keyword>
<keyword id="KW-0378">Hydrolase</keyword>
<keyword id="KW-0574">Periplasm</keyword>
<keyword id="KW-0645">Protease</keyword>
<keyword id="KW-0677">Repeat</keyword>
<keyword id="KW-0720">Serine protease</keyword>
<keyword id="KW-0732">Signal</keyword>
<keyword id="KW-0346">Stress response</keyword>